<proteinExistence type="evidence at transcript level"/>
<keyword id="KW-0963">Cytoplasm</keyword>
<keyword id="KW-0378">Hydrolase</keyword>
<keyword id="KW-0479">Metal-binding</keyword>
<keyword id="KW-0539">Nucleus</keyword>
<keyword id="KW-1185">Reference proteome</keyword>
<keyword id="KW-0862">Zinc</keyword>
<sequence length="600" mass="68188">MPEIKVTPLGAGQDVGRSCILVSIAGKNVMLDCGMHMGYNDDRRFPDFSYITQNGRLTDFLDCVIISHFHLDHCGALPYFSEMVGYDGPIYMTHPTKAICPILLEDYRKITVDKKGETNFFTSQMIKDCMKKVVAVHLHQTVQVDEELEIKAYYAGHVLGAAMFQIKVGCESVVYTGDYNMTPDRHLGAAWIDKCRPDLLITESTYATTIRDSKRCRERDFLKKVHETVERGGKVLIPVFALGRAQELCILLETFWERMNLKAPIYFSTGLTEKANHYYKLFITWTNQKIRKTFVQRNMFEFKHIKAFDRAFADNPGPMVVFATPGMLHAGQSLQIFRKWAGNEKNMVIMPGYCVQGTVGHKILSGQRKLEMEGRQILEVKMQVEYMSFSAHADAKGIMQLIRQAEPRNVLLVHGEAKKMEFLKQKIEQEFHVNCYMPANGETTTIFTNPSIPVDISLGLLKRETAIGLLPDAKKPKLMHGTLIMKDNSFRLVSPEQALKELGLAEHQLRFTCRVHIQDPRKEHETVLRVYNHLKGVLKDYSVQHLPDGSITVESILIQATAHSEDQGTKVLLVSWTYQDEELGSYLTSLLKKGLPQSTS</sequence>
<feature type="chain" id="PRO_0000259567" description="Integrator complex subunit 11">
    <location>
        <begin position="1"/>
        <end position="600"/>
    </location>
</feature>
<feature type="short sequence motif" description="HXHXDH motif">
    <location>
        <begin position="68"/>
        <end position="73"/>
    </location>
</feature>
<feature type="short sequence motif" description="Nuclear localization signal" evidence="1">
    <location>
        <begin position="469"/>
        <end position="479"/>
    </location>
</feature>
<feature type="active site" evidence="1">
    <location>
        <position position="203"/>
    </location>
</feature>
<feature type="binding site" evidence="1">
    <location>
        <position position="68"/>
    </location>
    <ligand>
        <name>Zn(2+)</name>
        <dbReference type="ChEBI" id="CHEBI:29105"/>
        <label>1</label>
    </ligand>
</feature>
<feature type="binding site" evidence="1">
    <location>
        <position position="70"/>
    </location>
    <ligand>
        <name>Zn(2+)</name>
        <dbReference type="ChEBI" id="CHEBI:29105"/>
        <label>1</label>
    </ligand>
</feature>
<feature type="binding site" evidence="1">
    <location>
        <position position="72"/>
    </location>
    <ligand>
        <name>Zn(2+)</name>
        <dbReference type="ChEBI" id="CHEBI:29105"/>
        <label>2</label>
    </ligand>
</feature>
<feature type="binding site" evidence="1">
    <location>
        <position position="73"/>
    </location>
    <ligand>
        <name>Zn(2+)</name>
        <dbReference type="ChEBI" id="CHEBI:29105"/>
        <label>2</label>
    </ligand>
</feature>
<feature type="binding site" evidence="1">
    <location>
        <position position="157"/>
    </location>
    <ligand>
        <name>Zn(2+)</name>
        <dbReference type="ChEBI" id="CHEBI:29105"/>
        <label>1</label>
    </ligand>
</feature>
<feature type="binding site" evidence="1">
    <location>
        <position position="178"/>
    </location>
    <ligand>
        <name>Zn(2+)</name>
        <dbReference type="ChEBI" id="CHEBI:29105"/>
        <label>1</label>
    </ligand>
</feature>
<feature type="binding site" evidence="1">
    <location>
        <position position="178"/>
    </location>
    <ligand>
        <name>Zn(2+)</name>
        <dbReference type="ChEBI" id="CHEBI:29105"/>
        <label>2</label>
    </ligand>
</feature>
<feature type="binding site" evidence="1">
    <location>
        <position position="414"/>
    </location>
    <ligand>
        <name>Zn(2+)</name>
        <dbReference type="ChEBI" id="CHEBI:29105"/>
        <label>2</label>
    </ligand>
</feature>
<name>INT11_CHICK</name>
<protein>
    <recommendedName>
        <fullName>Integrator complex subunit 11</fullName>
        <shortName>Int11</shortName>
        <ecNumber>3.1.27.-</ecNumber>
    </recommendedName>
    <alternativeName>
        <fullName>Cleavage and polyadenylation-specific factor 3-like protein</fullName>
        <shortName>CPSF3-like protein</shortName>
    </alternativeName>
</protein>
<organism>
    <name type="scientific">Gallus gallus</name>
    <name type="common">Chicken</name>
    <dbReference type="NCBI Taxonomy" id="9031"/>
    <lineage>
        <taxon>Eukaryota</taxon>
        <taxon>Metazoa</taxon>
        <taxon>Chordata</taxon>
        <taxon>Craniata</taxon>
        <taxon>Vertebrata</taxon>
        <taxon>Euteleostomi</taxon>
        <taxon>Archelosauria</taxon>
        <taxon>Archosauria</taxon>
        <taxon>Dinosauria</taxon>
        <taxon>Saurischia</taxon>
        <taxon>Theropoda</taxon>
        <taxon>Coelurosauria</taxon>
        <taxon>Aves</taxon>
        <taxon>Neognathae</taxon>
        <taxon>Galloanserae</taxon>
        <taxon>Galliformes</taxon>
        <taxon>Phasianidae</taxon>
        <taxon>Phasianinae</taxon>
        <taxon>Gallus</taxon>
    </lineage>
</organism>
<evidence type="ECO:0000250" key="1">
    <source>
        <dbReference type="UniProtKB" id="Q5TA45"/>
    </source>
</evidence>
<evidence type="ECO:0000305" key="2"/>
<accession>Q5ZIH0</accession>
<gene>
    <name type="primary">INTS11</name>
    <name type="synonym">CPSF3L</name>
    <name type="ORF">RCJMB04_26e19</name>
</gene>
<comment type="function">
    <text evidence="1">RNA endonuclease component of the integrator complex, a multiprotein complex that terminates RNA polymerase II (Pol II) transcription in the promoter-proximal region of genes. The integrator complex provides a quality checkpoint during transcription elongation by driving premature transcription termination of transcripts that are unfavorably configured for transcriptional elongation: the complex terminates transcription by (1) catalyzing dephosphorylation of the C-terminal domain (CTD) of Pol II subunit POLR2A/RPB1 and SUPT5H/SPT5, (2) degrading the exiting nascent RNA transcript via endonuclease activity and (3) promoting the release of Pol II from bound DNA. The integrator complex is also involved in terminating the synthesis of non-coding Pol II transcripts, such as enhancer RNAs (eRNAs), small nuclear RNAs (snRNAs), telomerase RNAs and long non-coding RNAs (lncRNAs). Within the integrator complex, INTS11 constitutes the RNA endonuclease subunit that degrades exiting nascent RNA transcripts.</text>
</comment>
<comment type="cofactor">
    <cofactor evidence="1">
        <name>Zn(2+)</name>
        <dbReference type="ChEBI" id="CHEBI:29105"/>
    </cofactor>
</comment>
<comment type="subunit">
    <text evidence="1">Component of the Integrator complex, composed of core subunits INTS1, INTS2, INTS3, INTS4, INTS5, INTS6, INTS7, INTS8, INTS9/RC74, INTS10, INTS11/CPSF3L, INTS12, INTS13, INTS14 and INTS15. The core complex associates with protein phosphatase 2A subunits PPP2CA and PPP2R1A, to form the Integrator-PP2A (INTAC) complex. INTS11 is part of the RNA endonuclease subcomplex, composed of INTS4, INTS9, INTS11 and inositol hexakisphosphate (InsP6).</text>
</comment>
<comment type="subcellular location">
    <subcellularLocation>
        <location evidence="1">Nucleus</location>
    </subcellularLocation>
    <subcellularLocation>
        <location evidence="1">Cytoplasm</location>
    </subcellularLocation>
</comment>
<comment type="similarity">
    <text evidence="2">Belongs to the metallo-beta-lactamase superfamily. RNA-metabolizing metallo-beta-lactamase-like family. INTS11 subfamily.</text>
</comment>
<reference key="1">
    <citation type="journal article" date="2005" name="Genome Biol.">
        <title>Full-length cDNAs from chicken bursal lymphocytes to facilitate gene function analysis.</title>
        <authorList>
            <person name="Caldwell R.B."/>
            <person name="Kierzek A.M."/>
            <person name="Arakawa H."/>
            <person name="Bezzubov Y."/>
            <person name="Zaim J."/>
            <person name="Fiedler P."/>
            <person name="Kutter S."/>
            <person name="Blagodatski A."/>
            <person name="Kostovska D."/>
            <person name="Koter M."/>
            <person name="Plachy J."/>
            <person name="Carninci P."/>
            <person name="Hayashizaki Y."/>
            <person name="Buerstedde J.-M."/>
        </authorList>
    </citation>
    <scope>NUCLEOTIDE SEQUENCE [LARGE SCALE MRNA]</scope>
    <source>
        <strain>CB</strain>
        <tissue>Bursa of Fabricius</tissue>
    </source>
</reference>
<dbReference type="EC" id="3.1.27.-"/>
<dbReference type="EMBL" id="AJ720814">
    <property type="protein sequence ID" value="CAG32473.1"/>
    <property type="molecule type" value="mRNA"/>
</dbReference>
<dbReference type="RefSeq" id="NP_001012854.1">
    <property type="nucleotide sequence ID" value="NM_001012836.2"/>
</dbReference>
<dbReference type="SMR" id="Q5ZIH0"/>
<dbReference type="FunCoup" id="Q5ZIH0">
    <property type="interactions" value="2034"/>
</dbReference>
<dbReference type="STRING" id="9031.ENSGALP00000002583"/>
<dbReference type="PaxDb" id="9031-ENSGALP00000002583"/>
<dbReference type="GeneID" id="419418"/>
<dbReference type="KEGG" id="gga:419418"/>
<dbReference type="CTD" id="54973"/>
<dbReference type="VEuPathDB" id="HostDB:geneid_419418"/>
<dbReference type="eggNOG" id="KOG1136">
    <property type="taxonomic scope" value="Eukaryota"/>
</dbReference>
<dbReference type="InParanoid" id="Q5ZIH0"/>
<dbReference type="OMA" id="YLDGMIW"/>
<dbReference type="OrthoDB" id="10249535at2759"/>
<dbReference type="PhylomeDB" id="Q5ZIH0"/>
<dbReference type="PRO" id="PR:Q5ZIH0"/>
<dbReference type="Proteomes" id="UP000000539">
    <property type="component" value="Unassembled WGS sequence"/>
</dbReference>
<dbReference type="GO" id="GO:0005737">
    <property type="term" value="C:cytoplasm"/>
    <property type="evidence" value="ECO:0000250"/>
    <property type="project" value="UniProtKB"/>
</dbReference>
<dbReference type="GO" id="GO:0160232">
    <property type="term" value="C:INTAC complex"/>
    <property type="evidence" value="ECO:0000250"/>
    <property type="project" value="UniProtKB"/>
</dbReference>
<dbReference type="GO" id="GO:0032039">
    <property type="term" value="C:integrator complex"/>
    <property type="evidence" value="ECO:0000250"/>
    <property type="project" value="HGNC"/>
</dbReference>
<dbReference type="GO" id="GO:0005634">
    <property type="term" value="C:nucleus"/>
    <property type="evidence" value="ECO:0000250"/>
    <property type="project" value="UniProtKB"/>
</dbReference>
<dbReference type="GO" id="GO:0004521">
    <property type="term" value="F:RNA endonuclease activity"/>
    <property type="evidence" value="ECO:0000250"/>
    <property type="project" value="UniProtKB"/>
</dbReference>
<dbReference type="GO" id="GO:0160240">
    <property type="term" value="P:RNA polymerase II transcription initiation surveillance"/>
    <property type="evidence" value="ECO:0000250"/>
    <property type="project" value="UniProtKB"/>
</dbReference>
<dbReference type="GO" id="GO:0034472">
    <property type="term" value="P:snRNA 3'-end processing"/>
    <property type="evidence" value="ECO:0000250"/>
    <property type="project" value="UniProtKB"/>
</dbReference>
<dbReference type="GO" id="GO:0016180">
    <property type="term" value="P:snRNA processing"/>
    <property type="evidence" value="ECO:0000250"/>
    <property type="project" value="HGNC"/>
</dbReference>
<dbReference type="CDD" id="cd16291">
    <property type="entry name" value="INTS11-like_MBL-fold"/>
    <property type="match status" value="1"/>
</dbReference>
<dbReference type="FunFam" id="3.40.50.10890:FF:000002">
    <property type="entry name" value="Integrator complex subunit 11"/>
    <property type="match status" value="1"/>
</dbReference>
<dbReference type="FunFam" id="3.60.15.10:FF:000003">
    <property type="entry name" value="Integrator complex subunit 11"/>
    <property type="match status" value="1"/>
</dbReference>
<dbReference type="Gene3D" id="3.40.50.10890">
    <property type="match status" value="1"/>
</dbReference>
<dbReference type="Gene3D" id="3.60.15.10">
    <property type="entry name" value="Ribonuclease Z/Hydroxyacylglutathione hydrolase-like"/>
    <property type="match status" value="1"/>
</dbReference>
<dbReference type="InterPro" id="IPR022712">
    <property type="entry name" value="Beta_Casp"/>
</dbReference>
<dbReference type="InterPro" id="IPR041897">
    <property type="entry name" value="INTS11-like_MBL-fold"/>
</dbReference>
<dbReference type="InterPro" id="IPR048662">
    <property type="entry name" value="IntS11_C"/>
</dbReference>
<dbReference type="InterPro" id="IPR050698">
    <property type="entry name" value="MBL"/>
</dbReference>
<dbReference type="InterPro" id="IPR001279">
    <property type="entry name" value="Metallo-B-lactamas"/>
</dbReference>
<dbReference type="InterPro" id="IPR036866">
    <property type="entry name" value="RibonucZ/Hydroxyglut_hydro"/>
</dbReference>
<dbReference type="InterPro" id="IPR011108">
    <property type="entry name" value="RMMBL"/>
</dbReference>
<dbReference type="PANTHER" id="PTHR11203">
    <property type="entry name" value="CLEAVAGE AND POLYADENYLATION SPECIFICITY FACTOR FAMILY MEMBER"/>
    <property type="match status" value="1"/>
</dbReference>
<dbReference type="PANTHER" id="PTHR11203:SF37">
    <property type="entry name" value="INTEGRATOR COMPLEX SUBUNIT 11"/>
    <property type="match status" value="1"/>
</dbReference>
<dbReference type="Pfam" id="PF10996">
    <property type="entry name" value="Beta-Casp"/>
    <property type="match status" value="1"/>
</dbReference>
<dbReference type="Pfam" id="PF21386">
    <property type="entry name" value="IntS11_C"/>
    <property type="match status" value="1"/>
</dbReference>
<dbReference type="Pfam" id="PF16661">
    <property type="entry name" value="Lactamase_B_6"/>
    <property type="match status" value="1"/>
</dbReference>
<dbReference type="Pfam" id="PF07521">
    <property type="entry name" value="RMMBL"/>
    <property type="match status" value="1"/>
</dbReference>
<dbReference type="SMART" id="SM01027">
    <property type="entry name" value="Beta-Casp"/>
    <property type="match status" value="1"/>
</dbReference>
<dbReference type="SMART" id="SM00849">
    <property type="entry name" value="Lactamase_B"/>
    <property type="match status" value="1"/>
</dbReference>
<dbReference type="SUPFAM" id="SSF56281">
    <property type="entry name" value="Metallo-hydrolase/oxidoreductase"/>
    <property type="match status" value="1"/>
</dbReference>